<feature type="chain" id="PRO_0000191775" description="UDP-N-acetylglucosamine--peptide N-acetylglucosaminyltransferase">
    <location>
        <begin position="1"/>
        <end position="1151"/>
    </location>
</feature>
<feature type="repeat" description="TPR 1">
    <location>
        <begin position="125"/>
        <end position="158"/>
    </location>
</feature>
<feature type="repeat" description="TPR 2">
    <location>
        <begin position="193"/>
        <end position="226"/>
    </location>
</feature>
<feature type="repeat" description="TPR 3">
    <location>
        <begin position="227"/>
        <end position="260"/>
    </location>
</feature>
<feature type="repeat" description="TPR 4">
    <location>
        <begin position="261"/>
        <end position="294"/>
    </location>
</feature>
<feature type="repeat" description="TPR 5">
    <location>
        <begin position="295"/>
        <end position="328"/>
    </location>
</feature>
<feature type="repeat" description="TPR 6">
    <location>
        <begin position="329"/>
        <end position="362"/>
    </location>
</feature>
<feature type="repeat" description="TPR 7">
    <location>
        <begin position="363"/>
        <end position="396"/>
    </location>
</feature>
<feature type="repeat" description="TPR 8">
    <location>
        <begin position="397"/>
        <end position="430"/>
    </location>
</feature>
<feature type="repeat" description="TPR 9">
    <location>
        <begin position="431"/>
        <end position="464"/>
    </location>
</feature>
<feature type="repeat" description="TPR 10">
    <location>
        <begin position="465"/>
        <end position="498"/>
    </location>
</feature>
<feature type="repeat" description="TPR 11">
    <location>
        <begin position="499"/>
        <end position="532"/>
    </location>
</feature>
<feature type="repeat" description="TPR 12">
    <location>
        <begin position="533"/>
        <end position="566"/>
    </location>
</feature>
<feature type="repeat" description="TPR 13; truncated">
    <location>
        <begin position="567"/>
        <end position="577"/>
    </location>
</feature>
<feature type="short sequence motif" description="Nuclear localization signal" evidence="3">
    <location>
        <begin position="591"/>
        <end position="607"/>
    </location>
</feature>
<feature type="active site" description="Proton acceptor" evidence="2">
    <location>
        <position position="612"/>
    </location>
</feature>
<feature type="binding site" evidence="2">
    <location>
        <position position="954"/>
    </location>
    <ligand>
        <name>UDP</name>
        <dbReference type="ChEBI" id="CHEBI:58223"/>
    </ligand>
</feature>
<feature type="binding site" evidence="2">
    <location>
        <position position="957"/>
    </location>
    <ligand>
        <name>UDP</name>
        <dbReference type="ChEBI" id="CHEBI:58223"/>
    </ligand>
</feature>
<feature type="binding site" evidence="2">
    <location>
        <begin position="1010"/>
        <end position="1013"/>
    </location>
    <ligand>
        <name>UDP</name>
        <dbReference type="ChEBI" id="CHEBI:58223"/>
    </ligand>
</feature>
<feature type="binding site" evidence="2">
    <location>
        <begin position="1016"/>
        <end position="1019"/>
    </location>
    <ligand>
        <name>UDP</name>
        <dbReference type="ChEBI" id="CHEBI:58223"/>
    </ligand>
</feature>
<feature type="binding site" evidence="2">
    <location>
        <begin position="1034"/>
        <end position="1036"/>
    </location>
    <ligand>
        <name>UDP</name>
        <dbReference type="ChEBI" id="CHEBI:58223"/>
    </ligand>
</feature>
<feature type="binding site" evidence="2">
    <location>
        <position position="1040"/>
    </location>
    <ligand>
        <name>UDP</name>
        <dbReference type="ChEBI" id="CHEBI:58223"/>
    </ligand>
</feature>
<feature type="sequence conflict" description="In Ref. 1; AAB63465." evidence="7" ref="1">
    <original>T</original>
    <variation>A</variation>
    <location>
        <position position="129"/>
    </location>
</feature>
<keyword id="KW-0963">Cytoplasm</keyword>
<keyword id="KW-0903">Direct protein sequencing</keyword>
<keyword id="KW-0328">Glycosyltransferase</keyword>
<keyword id="KW-0539">Nucleus</keyword>
<keyword id="KW-1185">Reference proteome</keyword>
<keyword id="KW-0677">Repeat</keyword>
<keyword id="KW-0802">TPR repeat</keyword>
<keyword id="KW-0808">Transferase</keyword>
<comment type="function">
    <text evidence="2 5">Addition of nucleotide-activated sugars directly onto the polypeptide through O-glycosidic linkage with the hydroxyl of serine or threonine (By similarity). Influences tap habituation in the mechanosensory neurons cell autonomously (PubMed:30429311).</text>
</comment>
<comment type="catalytic activity">
    <reaction evidence="2">
        <text>L-seryl-[protein] + UDP-N-acetyl-alpha-D-glucosamine = 3-O-(N-acetyl-beta-D-glucosaminyl)-L-seryl-[protein] + UDP + H(+)</text>
        <dbReference type="Rhea" id="RHEA:48904"/>
        <dbReference type="Rhea" id="RHEA-COMP:9863"/>
        <dbReference type="Rhea" id="RHEA-COMP:12251"/>
        <dbReference type="ChEBI" id="CHEBI:15378"/>
        <dbReference type="ChEBI" id="CHEBI:29999"/>
        <dbReference type="ChEBI" id="CHEBI:57705"/>
        <dbReference type="ChEBI" id="CHEBI:58223"/>
        <dbReference type="ChEBI" id="CHEBI:90838"/>
        <dbReference type="EC" id="2.4.1.255"/>
    </reaction>
</comment>
<comment type="catalytic activity">
    <reaction evidence="2">
        <text>L-threonyl-[protein] + UDP-N-acetyl-alpha-D-glucosamine = 3-O-(N-acetyl-beta-D-glucosaminyl)-L-threonyl-[protein] + UDP + H(+)</text>
        <dbReference type="Rhea" id="RHEA:48908"/>
        <dbReference type="Rhea" id="RHEA-COMP:11060"/>
        <dbReference type="Rhea" id="RHEA-COMP:12252"/>
        <dbReference type="ChEBI" id="CHEBI:15378"/>
        <dbReference type="ChEBI" id="CHEBI:30013"/>
        <dbReference type="ChEBI" id="CHEBI:57705"/>
        <dbReference type="ChEBI" id="CHEBI:58223"/>
        <dbReference type="ChEBI" id="CHEBI:90840"/>
        <dbReference type="EC" id="2.4.1.255"/>
    </reaction>
</comment>
<comment type="pathway">
    <text>Protein modification; protein glycosylation.</text>
</comment>
<comment type="subcellular location">
    <subcellularLocation>
        <location evidence="6">Nucleus</location>
    </subcellularLocation>
    <subcellularLocation>
        <location evidence="6">Cytoplasm</location>
        <location evidence="6">Perinuclear region</location>
    </subcellularLocation>
</comment>
<comment type="domain">
    <text evidence="1">The TPR repeat domain mediates recognition of protein substrates.</text>
</comment>
<comment type="disruption phenotype">
    <text evidence="4 5">Cells lack O-GlcNAc post-translational modification and brood size decreases with increasing ambient temperature. Reverses at a speed similar to the wild-type but for significantly longer duration following mechanosensory stimulation (PubMed:30429311).</text>
</comment>
<comment type="similarity">
    <text evidence="7">Belongs to the glycosyltransferase 41 family. O-GlcNAc transferase subfamily.</text>
</comment>
<accession>O18158</accession>
<accession>Q21232</accession>
<reference evidence="7" key="1">
    <citation type="journal article" date="1997" name="J. Biol. Chem.">
        <title>O-linked GlcNAc transferase is a conserved nucleocytoplasmic protein containing tetratricopeptide repeats.</title>
        <authorList>
            <person name="Lubas W.A."/>
            <person name="Frank D.W."/>
            <person name="Krause M."/>
            <person name="Hanover J.A."/>
        </authorList>
    </citation>
    <scope>NUCLEOTIDE SEQUENCE [MRNA]</scope>
    <scope>PROTEIN SEQUENCE OF 321-340 AND 1060-1076</scope>
    <scope>SUBCELLULAR LOCATION</scope>
</reference>
<reference key="2">
    <citation type="journal article" date="1998" name="Science">
        <title>Genome sequence of the nematode C. elegans: a platform for investigating biology.</title>
        <authorList>
            <consortium name="The C. elegans sequencing consortium"/>
        </authorList>
    </citation>
    <scope>NUCLEOTIDE SEQUENCE [LARGE SCALE GENOMIC DNA]</scope>
    <source>
        <strain>Bristol N2</strain>
    </source>
</reference>
<reference key="3">
    <citation type="journal article" date="2014" name="Proc. Natl. Acad. Sci. U.S.A.">
        <title>O-GlcNAc reports ambient temperature and confers heat resistance on ectotherm development.</title>
        <authorList>
            <person name="Radermacher P.T."/>
            <person name="Myachina F."/>
            <person name="Bosshardt F."/>
            <person name="Pandey R."/>
            <person name="Mariappa D."/>
            <person name="Mueller H.A."/>
            <person name="Lehner C.F."/>
        </authorList>
    </citation>
    <scope>DISRUPTION PHENOTYPE</scope>
</reference>
<reference evidence="7" key="4">
    <citation type="journal article" date="2018" name="Proc. R. Soc. B">
        <title>Insights into the roles of CMK-1 and OGT-1 in interstimulus interval-dependent habituation in Caenorhabditis elegans.</title>
        <authorList>
            <person name="Ardiel E.L."/>
            <person name="McDiarmid T.A."/>
            <person name="Timbers T.A."/>
            <person name="Lee K.C.Y."/>
            <person name="Safaei J."/>
            <person name="Pelech S.L."/>
            <person name="Rankin C.H."/>
        </authorList>
    </citation>
    <scope>FUNCTION</scope>
    <scope>DISRUPTION PHENOTYPE</scope>
</reference>
<dbReference type="EC" id="2.4.1.255" evidence="2"/>
<dbReference type="EMBL" id="U77412">
    <property type="protein sequence ID" value="AAB63465.1"/>
    <property type="molecule type" value="mRNA"/>
</dbReference>
<dbReference type="EMBL" id="FO080149">
    <property type="protein sequence ID" value="CCD61614.1"/>
    <property type="molecule type" value="Genomic_DNA"/>
</dbReference>
<dbReference type="PIR" id="E88499">
    <property type="entry name" value="E88499"/>
</dbReference>
<dbReference type="RefSeq" id="NP_001040860.1">
    <property type="nucleotide sequence ID" value="NM_001047395.5"/>
</dbReference>
<dbReference type="SMR" id="O18158"/>
<dbReference type="BioGRID" id="41212">
    <property type="interactions" value="13"/>
</dbReference>
<dbReference type="DIP" id="DIP-26521N"/>
<dbReference type="FunCoup" id="O18158">
    <property type="interactions" value="2870"/>
</dbReference>
<dbReference type="IntAct" id="O18158">
    <property type="interactions" value="1"/>
</dbReference>
<dbReference type="STRING" id="6239.K04G7.3a.2"/>
<dbReference type="CAZy" id="GT41">
    <property type="family name" value="Glycosyltransferase Family 41"/>
</dbReference>
<dbReference type="iPTMnet" id="O18158"/>
<dbReference type="PaxDb" id="6239-K04G7.3a"/>
<dbReference type="PeptideAtlas" id="O18158"/>
<dbReference type="EnsemblMetazoa" id="K04G7.3a.1">
    <property type="protein sequence ID" value="K04G7.3a.1"/>
    <property type="gene ID" value="WBGene00003858"/>
</dbReference>
<dbReference type="GeneID" id="176000"/>
<dbReference type="KEGG" id="cel:CELE_K04G7.3"/>
<dbReference type="UCSC" id="K04G7.3a">
    <property type="organism name" value="c. elegans"/>
</dbReference>
<dbReference type="AGR" id="WB:WBGene00003858"/>
<dbReference type="CTD" id="176000"/>
<dbReference type="WormBase" id="K04G7.3a">
    <property type="protein sequence ID" value="CE25042"/>
    <property type="gene ID" value="WBGene00003858"/>
    <property type="gene designation" value="ogt-1"/>
</dbReference>
<dbReference type="eggNOG" id="KOG4626">
    <property type="taxonomic scope" value="Eukaryota"/>
</dbReference>
<dbReference type="InParanoid" id="O18158"/>
<dbReference type="OMA" id="MNESEHF"/>
<dbReference type="OrthoDB" id="9991317at2759"/>
<dbReference type="PhylomeDB" id="O18158"/>
<dbReference type="SignaLink" id="O18158"/>
<dbReference type="UniPathway" id="UPA00378"/>
<dbReference type="PRO" id="PR:O18158"/>
<dbReference type="Proteomes" id="UP000001940">
    <property type="component" value="Chromosome III"/>
</dbReference>
<dbReference type="Bgee" id="WBGene00003858">
    <property type="expression patterns" value="Expressed in pharyngeal muscle cell (C elegans) and 4 other cell types or tissues"/>
</dbReference>
<dbReference type="ExpressionAtlas" id="O18158">
    <property type="expression patterns" value="baseline"/>
</dbReference>
<dbReference type="GO" id="GO:0005634">
    <property type="term" value="C:nucleus"/>
    <property type="evidence" value="ECO:0000314"/>
    <property type="project" value="UniProtKB"/>
</dbReference>
<dbReference type="GO" id="GO:0048471">
    <property type="term" value="C:perinuclear region of cytoplasm"/>
    <property type="evidence" value="ECO:0000314"/>
    <property type="project" value="WormBase"/>
</dbReference>
<dbReference type="GO" id="GO:0097363">
    <property type="term" value="F:protein O-acetylglucosaminyltransferase activity"/>
    <property type="evidence" value="ECO:0000315"/>
    <property type="project" value="UniProtKB"/>
</dbReference>
<dbReference type="GO" id="GO:0004722">
    <property type="term" value="F:protein serine/threonine phosphatase activity"/>
    <property type="evidence" value="ECO:0000315"/>
    <property type="project" value="WormBase"/>
</dbReference>
<dbReference type="GO" id="GO:0040024">
    <property type="term" value="P:dauer larval development"/>
    <property type="evidence" value="ECO:0000316"/>
    <property type="project" value="WormBase"/>
</dbReference>
<dbReference type="GO" id="GO:0006112">
    <property type="term" value="P:energy reserve metabolic process"/>
    <property type="evidence" value="ECO:0000315"/>
    <property type="project" value="WormBase"/>
</dbReference>
<dbReference type="GO" id="GO:0005977">
    <property type="term" value="P:glycogen metabolic process"/>
    <property type="evidence" value="ECO:0000315"/>
    <property type="project" value="WormBase"/>
</dbReference>
<dbReference type="GO" id="GO:0009100">
    <property type="term" value="P:glycoprotein metabolic process"/>
    <property type="evidence" value="ECO:0000315"/>
    <property type="project" value="UniProtKB"/>
</dbReference>
<dbReference type="GO" id="GO:0019915">
    <property type="term" value="P:lipid storage"/>
    <property type="evidence" value="ECO:0000315"/>
    <property type="project" value="WormBase"/>
</dbReference>
<dbReference type="GO" id="GO:0006493">
    <property type="term" value="P:protein O-linked glycosylation"/>
    <property type="evidence" value="ECO:0000315"/>
    <property type="project" value="WormBase"/>
</dbReference>
<dbReference type="GO" id="GO:0022414">
    <property type="term" value="P:reproductive process"/>
    <property type="evidence" value="ECO:0000315"/>
    <property type="project" value="WormBase"/>
</dbReference>
<dbReference type="GO" id="GO:0009266">
    <property type="term" value="P:response to temperature stimulus"/>
    <property type="evidence" value="ECO:0000315"/>
    <property type="project" value="UniProtKB"/>
</dbReference>
<dbReference type="FunFam" id="3.30.720.150:FF:000003">
    <property type="entry name" value="UDP-N-acetylglucosamine--peptide N-acetylglucosaminyltransferase"/>
    <property type="match status" value="1"/>
</dbReference>
<dbReference type="FunFam" id="1.25.40.10:FF:000013">
    <property type="entry name" value="UDP-N-acetylglucosamine--peptide N-acetylglucosaminyltransferase 110 kDa subunit"/>
    <property type="match status" value="1"/>
</dbReference>
<dbReference type="FunFam" id="1.25.40.10:FF:000019">
    <property type="entry name" value="UDP-N-acetylglucosamine--peptide N-acetylglucosaminyltransferase 110 kDa subunit"/>
    <property type="match status" value="1"/>
</dbReference>
<dbReference type="FunFam" id="3.40.50.11380:FF:000001">
    <property type="entry name" value="UDP-N-acetylglucosamine--peptide N-acetylglucosaminyltransferase 110 kDa subunit"/>
    <property type="match status" value="1"/>
</dbReference>
<dbReference type="FunFam" id="3.40.50.2000:FF:000012">
    <property type="entry name" value="UDP-N-acetylglucosamine--peptide N-acetylglucosaminyltransferase 110 kDa subunit"/>
    <property type="match status" value="1"/>
</dbReference>
<dbReference type="Gene3D" id="3.30.720.150">
    <property type="match status" value="1"/>
</dbReference>
<dbReference type="Gene3D" id="3.40.50.11380">
    <property type="match status" value="1"/>
</dbReference>
<dbReference type="Gene3D" id="3.40.50.2000">
    <property type="entry name" value="Glycogen Phosphorylase B"/>
    <property type="match status" value="1"/>
</dbReference>
<dbReference type="Gene3D" id="1.25.40.10">
    <property type="entry name" value="Tetratricopeptide repeat domain"/>
    <property type="match status" value="2"/>
</dbReference>
<dbReference type="InterPro" id="IPR037919">
    <property type="entry name" value="OGT"/>
</dbReference>
<dbReference type="InterPro" id="IPR029489">
    <property type="entry name" value="OGT/SEC/SPY_C"/>
</dbReference>
<dbReference type="InterPro" id="IPR011990">
    <property type="entry name" value="TPR-like_helical_dom_sf"/>
</dbReference>
<dbReference type="InterPro" id="IPR019734">
    <property type="entry name" value="TPR_rpt"/>
</dbReference>
<dbReference type="PANTHER" id="PTHR44366">
    <property type="entry name" value="UDP-N-ACETYLGLUCOSAMINE--PEPTIDE N-ACETYLGLUCOSAMINYLTRANSFERASE 110 KDA SUBUNIT"/>
    <property type="match status" value="1"/>
</dbReference>
<dbReference type="PANTHER" id="PTHR44366:SF1">
    <property type="entry name" value="UDP-N-ACETYLGLUCOSAMINE--PEPTIDE N-ACETYLGLUCOSAMINYLTRANSFERASE 110 KDA SUBUNIT"/>
    <property type="match status" value="1"/>
</dbReference>
<dbReference type="Pfam" id="PF13844">
    <property type="entry name" value="Glyco_transf_41"/>
    <property type="match status" value="1"/>
</dbReference>
<dbReference type="Pfam" id="PF00515">
    <property type="entry name" value="TPR_1"/>
    <property type="match status" value="1"/>
</dbReference>
<dbReference type="Pfam" id="PF13414">
    <property type="entry name" value="TPR_11"/>
    <property type="match status" value="4"/>
</dbReference>
<dbReference type="Pfam" id="PF13431">
    <property type="entry name" value="TPR_17"/>
    <property type="match status" value="1"/>
</dbReference>
<dbReference type="Pfam" id="PF13181">
    <property type="entry name" value="TPR_8"/>
    <property type="match status" value="1"/>
</dbReference>
<dbReference type="SMART" id="SM00028">
    <property type="entry name" value="TPR"/>
    <property type="match status" value="12"/>
</dbReference>
<dbReference type="SUPFAM" id="SSF48452">
    <property type="entry name" value="TPR-like"/>
    <property type="match status" value="2"/>
</dbReference>
<dbReference type="PROSITE" id="PS50005">
    <property type="entry name" value="TPR"/>
    <property type="match status" value="12"/>
</dbReference>
<dbReference type="PROSITE" id="PS50293">
    <property type="entry name" value="TPR_REGION"/>
    <property type="match status" value="1"/>
</dbReference>
<sequence length="1151" mass="128012">MEKPNYFQSYNKVIGATGEQLAPGAVPPHPVLAPSIAPGGVAGVSAANMANIMQTPGFANLVQQAIRTQLENQAAQQLAVNQQFQLNGATAVQQQLLLTPQQSLAQPIALAPQPTVVLNGVSETLKKVTELAHRQFQSGNYVEAEKYCNLVFQSDPNNLPTLLLLSAINFQTKNLEKSMQYSMLAIKVNNQCAEAYSNLGNYYKEKGQLQDALENYKLAVKLKPEFIDAYINLAAALVSGGDLEQAVTAYFNALQINPDLYCVRSDLGNLLKAMGRLEEAKVCYLKAIETQPQFAVAWSNLGCVFNSQGEIWLAIHHFEKAVTLDPNFLDAYINLGNVLKEARIFDRAVSAYLRALNLSGNHAVVHGNLACVYYEQGLIDLAIDTYKKAIDLQPHFPDAYCNLANALKEKGSVVEAEQMYMKALELCPTHADSQNNLANIKREQGKIEDATRLYLKALEIYPEFAAAHSNLASILQQQGKLNDAILHYKEAIRIAPTFADAYSNMGNTLKEMGDSSAAIACYNRAIQINPAFADAHSNLASIHKDAGNMAEAIQSYSTALKLKPDFPDAYCNLAHCHQIICDWNDYDKRVRKLVQIVEDQLCKKRLPSVHPHHSMLYPLSHAARIAIAAKHASLCFDKVHVQMLGKTPLIHADRFSVQNGQRLRIGYVSSDFGNHPTSHLMQSIPGMHDRSRVEVFCYALSVNDGTNFRSKLMNESEHFVDLSQIPCNGKAAEKIAQDGIHILINMNGYTKGARNEIFALRPAPIQVMWLGYPSTSGATFMDYIITDAVTSPLRLANAFTEKLAYMPHTFFIGDHAQMLRHLTDKVVVKDKETTERDSCLIMNTANMDPILAKSEIKEQVLDTEVVSGPNKELVRAEMVLPVLEVPTEPIKQMIMTGQMTMNVMEDMNVQNGLGQSQMHHKAATGEEIPNSVLLTSRAQYQLPDDAIVFCNFNQLYKIDPSTLDMWIKILENVPKSILWLLRFPYQGEEHIRKYCVERGLDPSRIVFSNVAAKEEHVRRGQLADVCLDTPLCNGHTTGMDILWTGTPMVTMPLESLASRVATSQLYALGVPELVAKTRQEYVSIAVRLGTDADHLANMRAKVWMARTSSTLFDVKQYCHDMEDLLGQMWKRYESGMPIDHITNNTETPHGL</sequence>
<gene>
    <name type="primary">ogt-1</name>
    <name type="ORF">K04G7.3</name>
</gene>
<organism>
    <name type="scientific">Caenorhabditis elegans</name>
    <dbReference type="NCBI Taxonomy" id="6239"/>
    <lineage>
        <taxon>Eukaryota</taxon>
        <taxon>Metazoa</taxon>
        <taxon>Ecdysozoa</taxon>
        <taxon>Nematoda</taxon>
        <taxon>Chromadorea</taxon>
        <taxon>Rhabditida</taxon>
        <taxon>Rhabditina</taxon>
        <taxon>Rhabditomorpha</taxon>
        <taxon>Rhabditoidea</taxon>
        <taxon>Rhabditidae</taxon>
        <taxon>Peloderinae</taxon>
        <taxon>Caenorhabditis</taxon>
    </lineage>
</organism>
<evidence type="ECO:0000250" key="1"/>
<evidence type="ECO:0000250" key="2">
    <source>
        <dbReference type="UniProtKB" id="O15294"/>
    </source>
</evidence>
<evidence type="ECO:0000255" key="3"/>
<evidence type="ECO:0000269" key="4">
    <source>
    </source>
</evidence>
<evidence type="ECO:0000269" key="5">
    <source>
    </source>
</evidence>
<evidence type="ECO:0000269" key="6">
    <source>
    </source>
</evidence>
<evidence type="ECO:0000305" key="7"/>
<name>OGT1_CAEEL</name>
<protein>
    <recommendedName>
        <fullName>UDP-N-acetylglucosamine--peptide N-acetylglucosaminyltransferase</fullName>
        <ecNumber evidence="2">2.4.1.255</ecNumber>
    </recommendedName>
    <alternativeName>
        <fullName>O-GlcNAc</fullName>
    </alternativeName>
    <alternativeName>
        <fullName>OGT</fullName>
    </alternativeName>
</protein>
<proteinExistence type="evidence at protein level"/>